<dbReference type="EMBL" id="CP000091">
    <property type="protein sequence ID" value="AAZ65073.1"/>
    <property type="molecule type" value="Genomic_DNA"/>
</dbReference>
<dbReference type="SMR" id="Q46P61"/>
<dbReference type="STRING" id="264198.Reut_B5729"/>
<dbReference type="KEGG" id="reu:Reut_B5729"/>
<dbReference type="eggNOG" id="COG0238">
    <property type="taxonomic scope" value="Bacteria"/>
</dbReference>
<dbReference type="HOGENOM" id="CLU_148710_0_3_4"/>
<dbReference type="OrthoDB" id="9812008at2"/>
<dbReference type="GO" id="GO:0022627">
    <property type="term" value="C:cytosolic small ribosomal subunit"/>
    <property type="evidence" value="ECO:0007669"/>
    <property type="project" value="TreeGrafter"/>
</dbReference>
<dbReference type="GO" id="GO:0070181">
    <property type="term" value="F:small ribosomal subunit rRNA binding"/>
    <property type="evidence" value="ECO:0007669"/>
    <property type="project" value="TreeGrafter"/>
</dbReference>
<dbReference type="GO" id="GO:0003735">
    <property type="term" value="F:structural constituent of ribosome"/>
    <property type="evidence" value="ECO:0007669"/>
    <property type="project" value="InterPro"/>
</dbReference>
<dbReference type="GO" id="GO:0006412">
    <property type="term" value="P:translation"/>
    <property type="evidence" value="ECO:0007669"/>
    <property type="project" value="UniProtKB-UniRule"/>
</dbReference>
<dbReference type="Gene3D" id="4.10.640.10">
    <property type="entry name" value="Ribosomal protein S18"/>
    <property type="match status" value="1"/>
</dbReference>
<dbReference type="HAMAP" id="MF_00270">
    <property type="entry name" value="Ribosomal_bS18"/>
    <property type="match status" value="1"/>
</dbReference>
<dbReference type="InterPro" id="IPR001648">
    <property type="entry name" value="Ribosomal_bS18"/>
</dbReference>
<dbReference type="InterPro" id="IPR018275">
    <property type="entry name" value="Ribosomal_bS18_CS"/>
</dbReference>
<dbReference type="InterPro" id="IPR036870">
    <property type="entry name" value="Ribosomal_bS18_sf"/>
</dbReference>
<dbReference type="NCBIfam" id="TIGR00165">
    <property type="entry name" value="S18"/>
    <property type="match status" value="1"/>
</dbReference>
<dbReference type="PANTHER" id="PTHR13479">
    <property type="entry name" value="30S RIBOSOMAL PROTEIN S18"/>
    <property type="match status" value="1"/>
</dbReference>
<dbReference type="PANTHER" id="PTHR13479:SF40">
    <property type="entry name" value="SMALL RIBOSOMAL SUBUNIT PROTEIN BS18M"/>
    <property type="match status" value="1"/>
</dbReference>
<dbReference type="Pfam" id="PF01084">
    <property type="entry name" value="Ribosomal_S18"/>
    <property type="match status" value="1"/>
</dbReference>
<dbReference type="PRINTS" id="PR00974">
    <property type="entry name" value="RIBOSOMALS18"/>
</dbReference>
<dbReference type="SUPFAM" id="SSF46911">
    <property type="entry name" value="Ribosomal protein S18"/>
    <property type="match status" value="1"/>
</dbReference>
<dbReference type="PROSITE" id="PS00057">
    <property type="entry name" value="RIBOSOMAL_S18"/>
    <property type="match status" value="1"/>
</dbReference>
<protein>
    <recommendedName>
        <fullName evidence="1">Small ribosomal subunit protein bS18B</fullName>
    </recommendedName>
    <alternativeName>
        <fullName evidence="2">30S ribosomal protein S18 2</fullName>
    </alternativeName>
</protein>
<organism>
    <name type="scientific">Cupriavidus pinatubonensis (strain JMP 134 / LMG 1197)</name>
    <name type="common">Cupriavidus necator (strain JMP 134)</name>
    <dbReference type="NCBI Taxonomy" id="264198"/>
    <lineage>
        <taxon>Bacteria</taxon>
        <taxon>Pseudomonadati</taxon>
        <taxon>Pseudomonadota</taxon>
        <taxon>Betaproteobacteria</taxon>
        <taxon>Burkholderiales</taxon>
        <taxon>Burkholderiaceae</taxon>
        <taxon>Cupriavidus</taxon>
    </lineage>
</organism>
<gene>
    <name evidence="1" type="primary">rpsR2</name>
    <name type="ordered locus">Reut_B5729</name>
</gene>
<name>RS182_CUPPJ</name>
<comment type="function">
    <text evidence="1">Binds as a heterodimer with protein bS6 to the central domain of the 16S rRNA, where it helps stabilize the platform of the 30S subunit.</text>
</comment>
<comment type="subunit">
    <text evidence="1">Part of the 30S ribosomal subunit. Forms a tight heterodimer with protein bS6.</text>
</comment>
<comment type="similarity">
    <text evidence="1">Belongs to the bacterial ribosomal protein bS18 family.</text>
</comment>
<proteinExistence type="inferred from homology"/>
<keyword id="KW-0687">Ribonucleoprotein</keyword>
<keyword id="KW-0689">Ribosomal protein</keyword>
<keyword id="KW-0694">RNA-binding</keyword>
<keyword id="KW-0699">rRNA-binding</keyword>
<evidence type="ECO:0000255" key="1">
    <source>
        <dbReference type="HAMAP-Rule" id="MF_00270"/>
    </source>
</evidence>
<evidence type="ECO:0000305" key="2"/>
<reference key="1">
    <citation type="journal article" date="2010" name="PLoS ONE">
        <title>The complete multipartite genome sequence of Cupriavidus necator JMP134, a versatile pollutant degrader.</title>
        <authorList>
            <person name="Lykidis A."/>
            <person name="Perez-Pantoja D."/>
            <person name="Ledger T."/>
            <person name="Mavromatis K."/>
            <person name="Anderson I.J."/>
            <person name="Ivanova N.N."/>
            <person name="Hooper S.D."/>
            <person name="Lapidus A."/>
            <person name="Lucas S."/>
            <person name="Gonzalez B."/>
            <person name="Kyrpides N.C."/>
        </authorList>
    </citation>
    <scope>NUCLEOTIDE SEQUENCE [LARGE SCALE GENOMIC DNA]</scope>
    <source>
        <strain>JMP134 / LMG 1197</strain>
    </source>
</reference>
<feature type="chain" id="PRO_0000345528" description="Small ribosomal subunit protein bS18B">
    <location>
        <begin position="1"/>
        <end position="92"/>
    </location>
</feature>
<accession>Q46P61</accession>
<sequence>MAFIKRSDKKKKPFKKESSLFKRKRYCRFTVAGVEQIDYKDLDTLKDFIGDNGKITPARLTGTKAHYQRQLNTAIKRARFLALLPYTDLHKH</sequence>